<accession>Q927G1</accession>
<protein>
    <recommendedName>
        <fullName evidence="1">Potassium-transporting ATPase KdpC subunit</fullName>
    </recommendedName>
    <alternativeName>
        <fullName evidence="1">ATP phosphohydrolase [potassium-transporting] C chain</fullName>
    </alternativeName>
    <alternativeName>
        <fullName evidence="1">Potassium-binding and translocating subunit C</fullName>
    </alternativeName>
    <alternativeName>
        <fullName evidence="1">Potassium-translocating ATPase C chain</fullName>
    </alternativeName>
</protein>
<reference key="1">
    <citation type="journal article" date="2001" name="Science">
        <title>Comparative genomics of Listeria species.</title>
        <authorList>
            <person name="Glaser P."/>
            <person name="Frangeul L."/>
            <person name="Buchrieser C."/>
            <person name="Rusniok C."/>
            <person name="Amend A."/>
            <person name="Baquero F."/>
            <person name="Berche P."/>
            <person name="Bloecker H."/>
            <person name="Brandt P."/>
            <person name="Chakraborty T."/>
            <person name="Charbit A."/>
            <person name="Chetouani F."/>
            <person name="Couve E."/>
            <person name="de Daruvar A."/>
            <person name="Dehoux P."/>
            <person name="Domann E."/>
            <person name="Dominguez-Bernal G."/>
            <person name="Duchaud E."/>
            <person name="Durant L."/>
            <person name="Dussurget O."/>
            <person name="Entian K.-D."/>
            <person name="Fsihi H."/>
            <person name="Garcia-del Portillo F."/>
            <person name="Garrido P."/>
            <person name="Gautier L."/>
            <person name="Goebel W."/>
            <person name="Gomez-Lopez N."/>
            <person name="Hain T."/>
            <person name="Hauf J."/>
            <person name="Jackson D."/>
            <person name="Jones L.-M."/>
            <person name="Kaerst U."/>
            <person name="Kreft J."/>
            <person name="Kuhn M."/>
            <person name="Kunst F."/>
            <person name="Kurapkat G."/>
            <person name="Madueno E."/>
            <person name="Maitournam A."/>
            <person name="Mata Vicente J."/>
            <person name="Ng E."/>
            <person name="Nedjari H."/>
            <person name="Nordsiek G."/>
            <person name="Novella S."/>
            <person name="de Pablos B."/>
            <person name="Perez-Diaz J.-C."/>
            <person name="Purcell R."/>
            <person name="Remmel B."/>
            <person name="Rose M."/>
            <person name="Schlueter T."/>
            <person name="Simoes N."/>
            <person name="Tierrez A."/>
            <person name="Vazquez-Boland J.-A."/>
            <person name="Voss H."/>
            <person name="Wehland J."/>
            <person name="Cossart P."/>
        </authorList>
    </citation>
    <scope>NUCLEOTIDE SEQUENCE [LARGE SCALE GENOMIC DNA]</scope>
    <source>
        <strain>ATCC BAA-680 / CLIP 11262</strain>
    </source>
</reference>
<proteinExistence type="inferred from homology"/>
<name>KDPC_LISIN</name>
<feature type="chain" id="PRO_0000196995" description="Potassium-transporting ATPase KdpC subunit">
    <location>
        <begin position="1"/>
        <end position="190"/>
    </location>
</feature>
<feature type="transmembrane region" description="Helical" evidence="1">
    <location>
        <begin position="13"/>
        <end position="33"/>
    </location>
</feature>
<comment type="function">
    <text evidence="1">Part of the high-affinity ATP-driven potassium transport (or Kdp) system, which catalyzes the hydrolysis of ATP coupled with the electrogenic transport of potassium into the cytoplasm. This subunit acts as a catalytic chaperone that increases the ATP-binding affinity of the ATP-hydrolyzing subunit KdpB by the formation of a transient KdpB/KdpC/ATP ternary complex.</text>
</comment>
<comment type="subunit">
    <text evidence="1">The system is composed of three essential subunits: KdpA, KdpB and KdpC.</text>
</comment>
<comment type="subcellular location">
    <subcellularLocation>
        <location evidence="1">Cell membrane</location>
        <topology evidence="1">Single-pass membrane protein</topology>
    </subcellularLocation>
</comment>
<comment type="similarity">
    <text evidence="1">Belongs to the KdpC family.</text>
</comment>
<evidence type="ECO:0000255" key="1">
    <source>
        <dbReference type="HAMAP-Rule" id="MF_00276"/>
    </source>
</evidence>
<gene>
    <name evidence="1" type="primary">kdpC</name>
    <name type="ordered locus">lin2828</name>
</gene>
<dbReference type="EMBL" id="AL596173">
    <property type="protein sequence ID" value="CAC98054.1"/>
    <property type="molecule type" value="Genomic_DNA"/>
</dbReference>
<dbReference type="PIR" id="AF1785">
    <property type="entry name" value="AF1785"/>
</dbReference>
<dbReference type="RefSeq" id="WP_010991395.1">
    <property type="nucleotide sequence ID" value="NC_003212.1"/>
</dbReference>
<dbReference type="SMR" id="Q927G1"/>
<dbReference type="STRING" id="272626.gene:17567215"/>
<dbReference type="KEGG" id="lin:kdpC"/>
<dbReference type="eggNOG" id="COG2156">
    <property type="taxonomic scope" value="Bacteria"/>
</dbReference>
<dbReference type="HOGENOM" id="CLU_077094_2_0_9"/>
<dbReference type="OrthoDB" id="9809491at2"/>
<dbReference type="Proteomes" id="UP000002513">
    <property type="component" value="Chromosome"/>
</dbReference>
<dbReference type="GO" id="GO:0005886">
    <property type="term" value="C:plasma membrane"/>
    <property type="evidence" value="ECO:0007669"/>
    <property type="project" value="UniProtKB-SubCell"/>
</dbReference>
<dbReference type="GO" id="GO:0005524">
    <property type="term" value="F:ATP binding"/>
    <property type="evidence" value="ECO:0007669"/>
    <property type="project" value="UniProtKB-UniRule"/>
</dbReference>
<dbReference type="GO" id="GO:0008556">
    <property type="term" value="F:P-type potassium transmembrane transporter activity"/>
    <property type="evidence" value="ECO:0007669"/>
    <property type="project" value="InterPro"/>
</dbReference>
<dbReference type="HAMAP" id="MF_00276">
    <property type="entry name" value="KdpC"/>
    <property type="match status" value="1"/>
</dbReference>
<dbReference type="InterPro" id="IPR003820">
    <property type="entry name" value="KdpC"/>
</dbReference>
<dbReference type="PANTHER" id="PTHR30042">
    <property type="entry name" value="POTASSIUM-TRANSPORTING ATPASE C CHAIN"/>
    <property type="match status" value="1"/>
</dbReference>
<dbReference type="PANTHER" id="PTHR30042:SF2">
    <property type="entry name" value="POTASSIUM-TRANSPORTING ATPASE KDPC SUBUNIT"/>
    <property type="match status" value="1"/>
</dbReference>
<dbReference type="Pfam" id="PF02669">
    <property type="entry name" value="KdpC"/>
    <property type="match status" value="1"/>
</dbReference>
<dbReference type="PIRSF" id="PIRSF001296">
    <property type="entry name" value="K_ATPase_KdpC"/>
    <property type="match status" value="1"/>
</dbReference>
<keyword id="KW-0067">ATP-binding</keyword>
<keyword id="KW-1003">Cell membrane</keyword>
<keyword id="KW-0406">Ion transport</keyword>
<keyword id="KW-0472">Membrane</keyword>
<keyword id="KW-0547">Nucleotide-binding</keyword>
<keyword id="KW-0630">Potassium</keyword>
<keyword id="KW-0633">Potassium transport</keyword>
<keyword id="KW-0812">Transmembrane</keyword>
<keyword id="KW-1133">Transmembrane helix</keyword>
<keyword id="KW-0813">Transport</keyword>
<sequence>MKRFMQIWKPAVVGFLLLTLVCGVIYPGVVTIIAGAAFQDKANGSIIEGKLADGETGKYGSTEIGQTFTQPEYLIGRAASDGAATNLNPTSEEQKQLVEKRITWWHKLDPANNRVIPMDLVTASASGVDPDISEAAAAYQVDRISRERGISTKVVKEIIAENTSKRLLGFWGEPTVNVLQVNVALDSLKM</sequence>
<organism>
    <name type="scientific">Listeria innocua serovar 6a (strain ATCC BAA-680 / CLIP 11262)</name>
    <dbReference type="NCBI Taxonomy" id="272626"/>
    <lineage>
        <taxon>Bacteria</taxon>
        <taxon>Bacillati</taxon>
        <taxon>Bacillota</taxon>
        <taxon>Bacilli</taxon>
        <taxon>Bacillales</taxon>
        <taxon>Listeriaceae</taxon>
        <taxon>Listeria</taxon>
    </lineage>
</organism>